<reference key="1">
    <citation type="submission" date="2003-03" db="EMBL/GenBank/DDBJ databases">
        <title>The complete genome sequence of Neisseria gonorrhoeae.</title>
        <authorList>
            <person name="Lewis L.A."/>
            <person name="Gillaspy A.F."/>
            <person name="McLaughlin R.E."/>
            <person name="Gipson M."/>
            <person name="Ducey T.F."/>
            <person name="Ownbey T."/>
            <person name="Hartman K."/>
            <person name="Nydick C."/>
            <person name="Carson M.B."/>
            <person name="Vaughn J."/>
            <person name="Thomson C."/>
            <person name="Song L."/>
            <person name="Lin S."/>
            <person name="Yuan X."/>
            <person name="Najar F."/>
            <person name="Zhan M."/>
            <person name="Ren Q."/>
            <person name="Zhu H."/>
            <person name="Qi S."/>
            <person name="Kenton S.M."/>
            <person name="Lai H."/>
            <person name="White J.D."/>
            <person name="Clifton S."/>
            <person name="Roe B.A."/>
            <person name="Dyer D.W."/>
        </authorList>
    </citation>
    <scope>NUCLEOTIDE SEQUENCE [LARGE SCALE GENOMIC DNA]</scope>
    <source>
        <strain>ATCC 700825 / FA 1090</strain>
    </source>
</reference>
<accession>Q5F4Y9</accession>
<dbReference type="EMBL" id="AE004969">
    <property type="protein sequence ID" value="AAW90748.1"/>
    <property type="molecule type" value="Genomic_DNA"/>
</dbReference>
<dbReference type="RefSeq" id="WP_003687159.1">
    <property type="nucleotide sequence ID" value="NC_002946.2"/>
</dbReference>
<dbReference type="RefSeq" id="YP_209160.1">
    <property type="nucleotide sequence ID" value="NC_002946.2"/>
</dbReference>
<dbReference type="SMR" id="Q5F4Y9"/>
<dbReference type="STRING" id="242231.NGO_2151"/>
<dbReference type="KEGG" id="ngo:NGO_2151"/>
<dbReference type="PATRIC" id="fig|242231.10.peg.2600"/>
<dbReference type="HOGENOM" id="CLU_084338_2_0_4"/>
<dbReference type="Proteomes" id="UP000000535">
    <property type="component" value="Chromosome"/>
</dbReference>
<dbReference type="GO" id="GO:0005886">
    <property type="term" value="C:plasma membrane"/>
    <property type="evidence" value="ECO:0007669"/>
    <property type="project" value="UniProtKB-SubCell"/>
</dbReference>
<dbReference type="GO" id="GO:0045259">
    <property type="term" value="C:proton-transporting ATP synthase complex"/>
    <property type="evidence" value="ECO:0007669"/>
    <property type="project" value="UniProtKB-KW"/>
</dbReference>
<dbReference type="GO" id="GO:0005524">
    <property type="term" value="F:ATP binding"/>
    <property type="evidence" value="ECO:0007669"/>
    <property type="project" value="UniProtKB-UniRule"/>
</dbReference>
<dbReference type="GO" id="GO:0046933">
    <property type="term" value="F:proton-transporting ATP synthase activity, rotational mechanism"/>
    <property type="evidence" value="ECO:0007669"/>
    <property type="project" value="UniProtKB-UniRule"/>
</dbReference>
<dbReference type="CDD" id="cd12152">
    <property type="entry name" value="F1-ATPase_delta"/>
    <property type="match status" value="1"/>
</dbReference>
<dbReference type="FunFam" id="2.60.15.10:FF:000012">
    <property type="entry name" value="ATP synthase epsilon chain"/>
    <property type="match status" value="1"/>
</dbReference>
<dbReference type="Gene3D" id="2.60.15.10">
    <property type="entry name" value="F0F1 ATP synthase delta/epsilon subunit, N-terminal"/>
    <property type="match status" value="1"/>
</dbReference>
<dbReference type="HAMAP" id="MF_00530">
    <property type="entry name" value="ATP_synth_epsil_bac"/>
    <property type="match status" value="1"/>
</dbReference>
<dbReference type="InterPro" id="IPR036794">
    <property type="entry name" value="ATP_F1_dsu/esu_C_sf"/>
</dbReference>
<dbReference type="InterPro" id="IPR001469">
    <property type="entry name" value="ATP_synth_F1_dsu/esu"/>
</dbReference>
<dbReference type="InterPro" id="IPR020546">
    <property type="entry name" value="ATP_synth_F1_dsu/esu_N"/>
</dbReference>
<dbReference type="InterPro" id="IPR020547">
    <property type="entry name" value="ATP_synth_F1_esu_C"/>
</dbReference>
<dbReference type="InterPro" id="IPR036771">
    <property type="entry name" value="ATPsynth_dsu/esu_N"/>
</dbReference>
<dbReference type="NCBIfam" id="TIGR01216">
    <property type="entry name" value="ATP_synt_epsi"/>
    <property type="match status" value="1"/>
</dbReference>
<dbReference type="NCBIfam" id="NF001847">
    <property type="entry name" value="PRK00571.1-4"/>
    <property type="match status" value="1"/>
</dbReference>
<dbReference type="NCBIfam" id="NF009977">
    <property type="entry name" value="PRK13442.1"/>
    <property type="match status" value="1"/>
</dbReference>
<dbReference type="PANTHER" id="PTHR13822">
    <property type="entry name" value="ATP SYNTHASE DELTA/EPSILON CHAIN"/>
    <property type="match status" value="1"/>
</dbReference>
<dbReference type="PANTHER" id="PTHR13822:SF10">
    <property type="entry name" value="ATP SYNTHASE EPSILON CHAIN, CHLOROPLASTIC"/>
    <property type="match status" value="1"/>
</dbReference>
<dbReference type="Pfam" id="PF00401">
    <property type="entry name" value="ATP-synt_DE"/>
    <property type="match status" value="1"/>
</dbReference>
<dbReference type="Pfam" id="PF02823">
    <property type="entry name" value="ATP-synt_DE_N"/>
    <property type="match status" value="1"/>
</dbReference>
<dbReference type="SUPFAM" id="SSF46604">
    <property type="entry name" value="Epsilon subunit of F1F0-ATP synthase C-terminal domain"/>
    <property type="match status" value="1"/>
</dbReference>
<dbReference type="SUPFAM" id="SSF51344">
    <property type="entry name" value="Epsilon subunit of F1F0-ATP synthase N-terminal domain"/>
    <property type="match status" value="1"/>
</dbReference>
<name>ATPE_NEIG1</name>
<protein>
    <recommendedName>
        <fullName evidence="1">ATP synthase epsilon chain</fullName>
    </recommendedName>
    <alternativeName>
        <fullName evidence="1">ATP synthase F1 sector epsilon subunit</fullName>
    </alternativeName>
    <alternativeName>
        <fullName evidence="1">F-ATPase epsilon subunit</fullName>
    </alternativeName>
</protein>
<keyword id="KW-0066">ATP synthesis</keyword>
<keyword id="KW-0997">Cell inner membrane</keyword>
<keyword id="KW-1003">Cell membrane</keyword>
<keyword id="KW-0139">CF(1)</keyword>
<keyword id="KW-0375">Hydrogen ion transport</keyword>
<keyword id="KW-0406">Ion transport</keyword>
<keyword id="KW-0472">Membrane</keyword>
<keyword id="KW-1185">Reference proteome</keyword>
<keyword id="KW-0813">Transport</keyword>
<comment type="function">
    <text evidence="1">Produces ATP from ADP in the presence of a proton gradient across the membrane.</text>
</comment>
<comment type="subunit">
    <text>F-type ATPases have 2 components, CF(1) - the catalytic core - and CF(0) - the membrane proton channel. CF(1) has five subunits: alpha(3), beta(3), gamma(1), delta(1), epsilon(1). CF(0) has three main subunits: a, b and c.</text>
</comment>
<comment type="subcellular location">
    <subcellularLocation>
        <location evidence="1">Cell inner membrane</location>
        <topology evidence="1">Peripheral membrane protein</topology>
    </subcellularLocation>
</comment>
<comment type="similarity">
    <text evidence="1">Belongs to the ATPase epsilon chain family.</text>
</comment>
<gene>
    <name evidence="1" type="primary">atpC</name>
    <name type="ordered locus">NGO_2151</name>
</gene>
<sequence length="140" mass="14987">MSIMQVEVVSGEQKIYSGEATFIVVPTVQGELGIYPRHEPIMSLVRPGALRLTVPGEDKEVLVAVSGGILEVQPDKVTVLADVAVRSAEMDRARAEEAKKAAEAGISQAKDDKALAEAHKALAAAIAQLKTLDYIRSHKK</sequence>
<evidence type="ECO:0000255" key="1">
    <source>
        <dbReference type="HAMAP-Rule" id="MF_00530"/>
    </source>
</evidence>
<feature type="chain" id="PRO_0000265844" description="ATP synthase epsilon chain">
    <location>
        <begin position="1"/>
        <end position="140"/>
    </location>
</feature>
<proteinExistence type="inferred from homology"/>
<organism>
    <name type="scientific">Neisseria gonorrhoeae (strain ATCC 700825 / FA 1090)</name>
    <dbReference type="NCBI Taxonomy" id="242231"/>
    <lineage>
        <taxon>Bacteria</taxon>
        <taxon>Pseudomonadati</taxon>
        <taxon>Pseudomonadota</taxon>
        <taxon>Betaproteobacteria</taxon>
        <taxon>Neisseriales</taxon>
        <taxon>Neisseriaceae</taxon>
        <taxon>Neisseria</taxon>
    </lineage>
</organism>